<evidence type="ECO:0000250" key="1"/>
<evidence type="ECO:0000250" key="2">
    <source>
        <dbReference type="UniProtKB" id="Q9NQ50"/>
    </source>
</evidence>
<evidence type="ECO:0000256" key="3">
    <source>
        <dbReference type="SAM" id="MobiDB-lite"/>
    </source>
</evidence>
<evidence type="ECO:0000269" key="4">
    <source>
    </source>
</evidence>
<evidence type="ECO:0000305" key="5"/>
<protein>
    <recommendedName>
        <fullName evidence="5">Large ribosomal subunit protein mL40</fullName>
    </recommendedName>
    <alternativeName>
        <fullName>39S ribosomal protein L40, mitochondrial</fullName>
        <shortName>L40mt</shortName>
        <shortName>MRP-L40</shortName>
    </alternativeName>
    <alternativeName>
        <fullName>Nuclear localization signal-containing protein deleted in velocardiofacial syndrome homolog</fullName>
    </alternativeName>
</protein>
<feature type="transit peptide" description="Mitochondrion" evidence="1">
    <location>
        <begin position="1"/>
        <end position="46"/>
    </location>
</feature>
<feature type="chain" id="PRO_0000030559" description="Large ribosomal subunit protein mL40">
    <location>
        <begin position="47"/>
        <end position="206"/>
    </location>
</feature>
<feature type="region of interest" description="Disordered" evidence="3">
    <location>
        <begin position="170"/>
        <end position="189"/>
    </location>
</feature>
<feature type="sequence variant" evidence="4">
    <original>T</original>
    <variation>K</variation>
    <location>
        <position position="200"/>
    </location>
</feature>
<reference key="1">
    <citation type="journal article" date="1998" name="Genomics">
        <title>Isolation and characterization of a human gene containing a nuclear localization signal from the critical region for velo-cardio-facial syndrome on 22q11.</title>
        <authorList>
            <person name="Funke B."/>
            <person name="Puech A."/>
            <person name="Saint-Jore B."/>
            <person name="Pandita R."/>
            <person name="Skoultchi A."/>
            <person name="Morrow B."/>
        </authorList>
    </citation>
    <scope>NUCLEOTIDE SEQUENCE [MRNA]</scope>
    <scope>TISSUE SPECIFICITY</scope>
    <scope>VARIANT LYS-200</scope>
</reference>
<reference key="2">
    <citation type="journal article" date="2004" name="Genome Res.">
        <title>The status, quality, and expansion of the NIH full-length cDNA project: the Mammalian Gene Collection (MGC).</title>
        <authorList>
            <consortium name="The MGC Project Team"/>
        </authorList>
    </citation>
    <scope>NUCLEOTIDE SEQUENCE [LARGE SCALE MRNA]</scope>
    <source>
        <strain>C57BL/6J</strain>
        <tissue>Mammary gland</tissue>
    </source>
</reference>
<reference key="3">
    <citation type="journal article" date="2005" name="Science">
        <title>The transcriptional landscape of the mammalian genome.</title>
        <authorList>
            <person name="Carninci P."/>
            <person name="Kasukawa T."/>
            <person name="Katayama S."/>
            <person name="Gough J."/>
            <person name="Frith M.C."/>
            <person name="Maeda N."/>
            <person name="Oyama R."/>
            <person name="Ravasi T."/>
            <person name="Lenhard B."/>
            <person name="Wells C."/>
            <person name="Kodzius R."/>
            <person name="Shimokawa K."/>
            <person name="Bajic V.B."/>
            <person name="Brenner S.E."/>
            <person name="Batalov S."/>
            <person name="Forrest A.R."/>
            <person name="Zavolan M."/>
            <person name="Davis M.J."/>
            <person name="Wilming L.G."/>
            <person name="Aidinis V."/>
            <person name="Allen J.E."/>
            <person name="Ambesi-Impiombato A."/>
            <person name="Apweiler R."/>
            <person name="Aturaliya R.N."/>
            <person name="Bailey T.L."/>
            <person name="Bansal M."/>
            <person name="Baxter L."/>
            <person name="Beisel K.W."/>
            <person name="Bersano T."/>
            <person name="Bono H."/>
            <person name="Chalk A.M."/>
            <person name="Chiu K.P."/>
            <person name="Choudhary V."/>
            <person name="Christoffels A."/>
            <person name="Clutterbuck D.R."/>
            <person name="Crowe M.L."/>
            <person name="Dalla E."/>
            <person name="Dalrymple B.P."/>
            <person name="de Bono B."/>
            <person name="Della Gatta G."/>
            <person name="di Bernardo D."/>
            <person name="Down T."/>
            <person name="Engstrom P."/>
            <person name="Fagiolini M."/>
            <person name="Faulkner G."/>
            <person name="Fletcher C.F."/>
            <person name="Fukushima T."/>
            <person name="Furuno M."/>
            <person name="Futaki S."/>
            <person name="Gariboldi M."/>
            <person name="Georgii-Hemming P."/>
            <person name="Gingeras T.R."/>
            <person name="Gojobori T."/>
            <person name="Green R.E."/>
            <person name="Gustincich S."/>
            <person name="Harbers M."/>
            <person name="Hayashi Y."/>
            <person name="Hensch T.K."/>
            <person name="Hirokawa N."/>
            <person name="Hill D."/>
            <person name="Huminiecki L."/>
            <person name="Iacono M."/>
            <person name="Ikeo K."/>
            <person name="Iwama A."/>
            <person name="Ishikawa T."/>
            <person name="Jakt M."/>
            <person name="Kanapin A."/>
            <person name="Katoh M."/>
            <person name="Kawasawa Y."/>
            <person name="Kelso J."/>
            <person name="Kitamura H."/>
            <person name="Kitano H."/>
            <person name="Kollias G."/>
            <person name="Krishnan S.P."/>
            <person name="Kruger A."/>
            <person name="Kummerfeld S.K."/>
            <person name="Kurochkin I.V."/>
            <person name="Lareau L.F."/>
            <person name="Lazarevic D."/>
            <person name="Lipovich L."/>
            <person name="Liu J."/>
            <person name="Liuni S."/>
            <person name="McWilliam S."/>
            <person name="Madan Babu M."/>
            <person name="Madera M."/>
            <person name="Marchionni L."/>
            <person name="Matsuda H."/>
            <person name="Matsuzawa S."/>
            <person name="Miki H."/>
            <person name="Mignone F."/>
            <person name="Miyake S."/>
            <person name="Morris K."/>
            <person name="Mottagui-Tabar S."/>
            <person name="Mulder N."/>
            <person name="Nakano N."/>
            <person name="Nakauchi H."/>
            <person name="Ng P."/>
            <person name="Nilsson R."/>
            <person name="Nishiguchi S."/>
            <person name="Nishikawa S."/>
            <person name="Nori F."/>
            <person name="Ohara O."/>
            <person name="Okazaki Y."/>
            <person name="Orlando V."/>
            <person name="Pang K.C."/>
            <person name="Pavan W.J."/>
            <person name="Pavesi G."/>
            <person name="Pesole G."/>
            <person name="Petrovsky N."/>
            <person name="Piazza S."/>
            <person name="Reed J."/>
            <person name="Reid J.F."/>
            <person name="Ring B.Z."/>
            <person name="Ringwald M."/>
            <person name="Rost B."/>
            <person name="Ruan Y."/>
            <person name="Salzberg S.L."/>
            <person name="Sandelin A."/>
            <person name="Schneider C."/>
            <person name="Schoenbach C."/>
            <person name="Sekiguchi K."/>
            <person name="Semple C.A."/>
            <person name="Seno S."/>
            <person name="Sessa L."/>
            <person name="Sheng Y."/>
            <person name="Shibata Y."/>
            <person name="Shimada H."/>
            <person name="Shimada K."/>
            <person name="Silva D."/>
            <person name="Sinclair B."/>
            <person name="Sperling S."/>
            <person name="Stupka E."/>
            <person name="Sugiura K."/>
            <person name="Sultana R."/>
            <person name="Takenaka Y."/>
            <person name="Taki K."/>
            <person name="Tammoja K."/>
            <person name="Tan S.L."/>
            <person name="Tang S."/>
            <person name="Taylor M.S."/>
            <person name="Tegner J."/>
            <person name="Teichmann S.A."/>
            <person name="Ueda H.R."/>
            <person name="van Nimwegen E."/>
            <person name="Verardo R."/>
            <person name="Wei C.L."/>
            <person name="Yagi K."/>
            <person name="Yamanishi H."/>
            <person name="Zabarovsky E."/>
            <person name="Zhu S."/>
            <person name="Zimmer A."/>
            <person name="Hide W."/>
            <person name="Bult C."/>
            <person name="Grimmond S.M."/>
            <person name="Teasdale R.D."/>
            <person name="Liu E.T."/>
            <person name="Brusic V."/>
            <person name="Quackenbush J."/>
            <person name="Wahlestedt C."/>
            <person name="Mattick J.S."/>
            <person name="Hume D.A."/>
            <person name="Kai C."/>
            <person name="Sasaki D."/>
            <person name="Tomaru Y."/>
            <person name="Fukuda S."/>
            <person name="Kanamori-Katayama M."/>
            <person name="Suzuki M."/>
            <person name="Aoki J."/>
            <person name="Arakawa T."/>
            <person name="Iida J."/>
            <person name="Imamura K."/>
            <person name="Itoh M."/>
            <person name="Kato T."/>
            <person name="Kawaji H."/>
            <person name="Kawagashira N."/>
            <person name="Kawashima T."/>
            <person name="Kojima M."/>
            <person name="Kondo S."/>
            <person name="Konno H."/>
            <person name="Nakano K."/>
            <person name="Ninomiya N."/>
            <person name="Nishio T."/>
            <person name="Okada M."/>
            <person name="Plessy C."/>
            <person name="Shibata K."/>
            <person name="Shiraki T."/>
            <person name="Suzuki S."/>
            <person name="Tagami M."/>
            <person name="Waki K."/>
            <person name="Watahiki A."/>
            <person name="Okamura-Oho Y."/>
            <person name="Suzuki H."/>
            <person name="Kawai J."/>
            <person name="Hayashizaki Y."/>
        </authorList>
    </citation>
    <scope>NUCLEOTIDE SEQUENCE [LARGE SCALE MRNA] OF 41-206</scope>
    <source>
        <strain>C57BL/6J</strain>
        <tissue>Embryo</tissue>
    </source>
</reference>
<reference key="4">
    <citation type="journal article" date="2010" name="Cell">
        <title>A tissue-specific atlas of mouse protein phosphorylation and expression.</title>
        <authorList>
            <person name="Huttlin E.L."/>
            <person name="Jedrychowski M.P."/>
            <person name="Elias J.E."/>
            <person name="Goswami T."/>
            <person name="Rad R."/>
            <person name="Beausoleil S.A."/>
            <person name="Villen J."/>
            <person name="Haas W."/>
            <person name="Sowa M.E."/>
            <person name="Gygi S.P."/>
        </authorList>
    </citation>
    <scope>IDENTIFICATION BY MASS SPECTROMETRY [LARGE SCALE ANALYSIS]</scope>
    <source>
        <tissue>Brain</tissue>
        <tissue>Brown adipose tissue</tissue>
        <tissue>Heart</tissue>
        <tissue>Kidney</tissue>
        <tissue>Liver</tissue>
        <tissue>Lung</tissue>
        <tissue>Pancreas</tissue>
        <tissue>Spleen</tissue>
        <tissue>Testis</tissue>
    </source>
</reference>
<sequence length="206" mass="24301">MATGVMLCAARALRPRSWIPGTCQAHVRHTHQRASLLAFWDLIPMRAEPLRKKKKVDPRKDQAAKDRLKKRIRKLEKASQELIPIEDFITPVRFLDKSRQRPQEEHSPEESERRALLLKRWALFKQQEHEMERDAIRSMLEAQQEALEELKLESAELYAEAIKRDTSLFPFEKEGPHYTPPISNYQAPEGRYNDITKVYTQVEFKR</sequence>
<name>RM40_MOUSE</name>
<proteinExistence type="evidence at protein level"/>
<gene>
    <name type="primary">Mrpl40</name>
    <name type="synonym">Nlvcf</name>
</gene>
<accession>Q9Z2Q5</accession>
<accession>Q9CS52</accession>
<comment type="subunit">
    <text evidence="2">Component of the mitochondrial ribosome large subunit (39S) which comprises a 16S rRNA and about 50 distinct proteins.</text>
</comment>
<comment type="subcellular location">
    <subcellularLocation>
        <location evidence="2">Mitochondrion</location>
    </subcellularLocation>
</comment>
<comment type="tissue specificity">
    <text evidence="4">Ubiquitous.</text>
</comment>
<comment type="similarity">
    <text evidence="5">Belongs to the mitochondrion-specific ribosomal protein mL40 family.</text>
</comment>
<dbReference type="EMBL" id="AF034092">
    <property type="protein sequence ID" value="AAC70905.1"/>
    <property type="molecule type" value="mRNA"/>
</dbReference>
<dbReference type="EMBL" id="BC028436">
    <property type="protein sequence ID" value="AAH28436.1"/>
    <property type="molecule type" value="mRNA"/>
</dbReference>
<dbReference type="EMBL" id="AK018757">
    <property type="protein sequence ID" value="BAB31389.1"/>
    <property type="molecule type" value="mRNA"/>
</dbReference>
<dbReference type="CCDS" id="CCDS28030.1"/>
<dbReference type="RefSeq" id="NP_035052.2">
    <property type="nucleotide sequence ID" value="NM_010922.2"/>
</dbReference>
<dbReference type="SMR" id="Q9Z2Q5"/>
<dbReference type="BioGRID" id="201786">
    <property type="interactions" value="22"/>
</dbReference>
<dbReference type="ComplexPortal" id="CPX-5302">
    <property type="entry name" value="39S mitochondrial large ribosomal subunit"/>
</dbReference>
<dbReference type="FunCoup" id="Q9Z2Q5">
    <property type="interactions" value="2335"/>
</dbReference>
<dbReference type="STRING" id="10090.ENSMUSP00000023391"/>
<dbReference type="GlyGen" id="Q9Z2Q5">
    <property type="glycosylation" value="2 sites, 1 O-linked glycan (2 sites)"/>
</dbReference>
<dbReference type="iPTMnet" id="Q9Z2Q5"/>
<dbReference type="PhosphoSitePlus" id="Q9Z2Q5"/>
<dbReference type="jPOST" id="Q9Z2Q5"/>
<dbReference type="PaxDb" id="10090-ENSMUSP00000023391"/>
<dbReference type="ProteomicsDB" id="301604"/>
<dbReference type="Pumba" id="Q9Z2Q5"/>
<dbReference type="Antibodypedia" id="209">
    <property type="antibodies" value="136 antibodies from 24 providers"/>
</dbReference>
<dbReference type="DNASU" id="18100"/>
<dbReference type="Ensembl" id="ENSMUST00000023391.16">
    <property type="protein sequence ID" value="ENSMUSP00000023391.9"/>
    <property type="gene ID" value="ENSMUSG00000022706.17"/>
</dbReference>
<dbReference type="GeneID" id="18100"/>
<dbReference type="KEGG" id="mmu:18100"/>
<dbReference type="UCSC" id="uc007yop.2">
    <property type="organism name" value="mouse"/>
</dbReference>
<dbReference type="AGR" id="MGI:1332635"/>
<dbReference type="CTD" id="64976"/>
<dbReference type="MGI" id="MGI:1332635">
    <property type="gene designation" value="Mrpl40"/>
</dbReference>
<dbReference type="VEuPathDB" id="HostDB:ENSMUSG00000022706"/>
<dbReference type="eggNOG" id="KOG4778">
    <property type="taxonomic scope" value="Eukaryota"/>
</dbReference>
<dbReference type="GeneTree" id="ENSGT00390000010239"/>
<dbReference type="InParanoid" id="Q9Z2Q5"/>
<dbReference type="OMA" id="KEWARYK"/>
<dbReference type="OrthoDB" id="5977625at2759"/>
<dbReference type="PhylomeDB" id="Q9Z2Q5"/>
<dbReference type="TreeFam" id="TF105982"/>
<dbReference type="Reactome" id="R-MMU-5389840">
    <property type="pathway name" value="Mitochondrial translation elongation"/>
</dbReference>
<dbReference type="Reactome" id="R-MMU-5419276">
    <property type="pathway name" value="Mitochondrial translation termination"/>
</dbReference>
<dbReference type="BioGRID-ORCS" id="18100">
    <property type="hits" value="24 hits in 78 CRISPR screens"/>
</dbReference>
<dbReference type="PRO" id="PR:Q9Z2Q5"/>
<dbReference type="Proteomes" id="UP000000589">
    <property type="component" value="Chromosome 16"/>
</dbReference>
<dbReference type="RNAct" id="Q9Z2Q5">
    <property type="molecule type" value="protein"/>
</dbReference>
<dbReference type="Bgee" id="ENSMUSG00000022706">
    <property type="expression patterns" value="Expressed in epiblast cell in embryo and 270 other cell types or tissues"/>
</dbReference>
<dbReference type="ExpressionAtlas" id="Q9Z2Q5">
    <property type="expression patterns" value="baseline and differential"/>
</dbReference>
<dbReference type="GO" id="GO:0005743">
    <property type="term" value="C:mitochondrial inner membrane"/>
    <property type="evidence" value="ECO:0000303"/>
    <property type="project" value="ComplexPortal"/>
</dbReference>
<dbReference type="GO" id="GO:0005762">
    <property type="term" value="C:mitochondrial large ribosomal subunit"/>
    <property type="evidence" value="ECO:0000250"/>
    <property type="project" value="UniProtKB"/>
</dbReference>
<dbReference type="GO" id="GO:0005761">
    <property type="term" value="C:mitochondrial ribosome"/>
    <property type="evidence" value="ECO:0000250"/>
    <property type="project" value="UniProtKB"/>
</dbReference>
<dbReference type="GO" id="GO:0005739">
    <property type="term" value="C:mitochondrion"/>
    <property type="evidence" value="ECO:0000314"/>
    <property type="project" value="MGI"/>
</dbReference>
<dbReference type="GO" id="GO:0005730">
    <property type="term" value="C:nucleolus"/>
    <property type="evidence" value="ECO:0007669"/>
    <property type="project" value="Ensembl"/>
</dbReference>
<dbReference type="GO" id="GO:0032543">
    <property type="term" value="P:mitochondrial translation"/>
    <property type="evidence" value="ECO:0000303"/>
    <property type="project" value="ComplexPortal"/>
</dbReference>
<dbReference type="FunFam" id="6.10.250.3440:FF:000001">
    <property type="entry name" value="Mitochondrial ribosomal protein L40"/>
    <property type="match status" value="1"/>
</dbReference>
<dbReference type="Gene3D" id="6.10.250.3440">
    <property type="match status" value="1"/>
</dbReference>
<dbReference type="InterPro" id="IPR019192">
    <property type="entry name" value="Ribosomal_mL40"/>
</dbReference>
<dbReference type="InterPro" id="IPR039145">
    <property type="entry name" value="Ribosomal_mL40_metazoa/plant"/>
</dbReference>
<dbReference type="PANTHER" id="PTHR13359">
    <property type="entry name" value="39S RIBOSOMAL PROTEIN L40, MITOCHONDRIAL"/>
    <property type="match status" value="1"/>
</dbReference>
<dbReference type="PANTHER" id="PTHR13359:SF2">
    <property type="entry name" value="LARGE RIBOSOMAL SUBUNIT PROTEIN ML40"/>
    <property type="match status" value="1"/>
</dbReference>
<dbReference type="Pfam" id="PF09812">
    <property type="entry name" value="MRP-L28"/>
    <property type="match status" value="1"/>
</dbReference>
<keyword id="KW-0496">Mitochondrion</keyword>
<keyword id="KW-1185">Reference proteome</keyword>
<keyword id="KW-0687">Ribonucleoprotein</keyword>
<keyword id="KW-0689">Ribosomal protein</keyword>
<keyword id="KW-0809">Transit peptide</keyword>
<organism>
    <name type="scientific">Mus musculus</name>
    <name type="common">Mouse</name>
    <dbReference type="NCBI Taxonomy" id="10090"/>
    <lineage>
        <taxon>Eukaryota</taxon>
        <taxon>Metazoa</taxon>
        <taxon>Chordata</taxon>
        <taxon>Craniata</taxon>
        <taxon>Vertebrata</taxon>
        <taxon>Euteleostomi</taxon>
        <taxon>Mammalia</taxon>
        <taxon>Eutheria</taxon>
        <taxon>Euarchontoglires</taxon>
        <taxon>Glires</taxon>
        <taxon>Rodentia</taxon>
        <taxon>Myomorpha</taxon>
        <taxon>Muroidea</taxon>
        <taxon>Muridae</taxon>
        <taxon>Murinae</taxon>
        <taxon>Mus</taxon>
        <taxon>Mus</taxon>
    </lineage>
</organism>